<reference key="1">
    <citation type="journal article" date="1997" name="Nature">
        <title>The complete genome sequence of the hyperthermophilic, sulphate-reducing archaeon Archaeoglobus fulgidus.</title>
        <authorList>
            <person name="Klenk H.-P."/>
            <person name="Clayton R.A."/>
            <person name="Tomb J.-F."/>
            <person name="White O."/>
            <person name="Nelson K.E."/>
            <person name="Ketchum K.A."/>
            <person name="Dodson R.J."/>
            <person name="Gwinn M.L."/>
            <person name="Hickey E.K."/>
            <person name="Peterson J.D."/>
            <person name="Richardson D.L."/>
            <person name="Kerlavage A.R."/>
            <person name="Graham D.E."/>
            <person name="Kyrpides N.C."/>
            <person name="Fleischmann R.D."/>
            <person name="Quackenbush J."/>
            <person name="Lee N.H."/>
            <person name="Sutton G.G."/>
            <person name="Gill S.R."/>
            <person name="Kirkness E.F."/>
            <person name="Dougherty B.A."/>
            <person name="McKenney K."/>
            <person name="Adams M.D."/>
            <person name="Loftus B.J."/>
            <person name="Peterson S.N."/>
            <person name="Reich C.I."/>
            <person name="McNeil L.K."/>
            <person name="Badger J.H."/>
            <person name="Glodek A."/>
            <person name="Zhou L."/>
            <person name="Overbeek R."/>
            <person name="Gocayne J.D."/>
            <person name="Weidman J.F."/>
            <person name="McDonald L.A."/>
            <person name="Utterback T.R."/>
            <person name="Cotton M.D."/>
            <person name="Spriggs T."/>
            <person name="Artiach P."/>
            <person name="Kaine B.P."/>
            <person name="Sykes S.M."/>
            <person name="Sadow P.W."/>
            <person name="D'Andrea K.P."/>
            <person name="Bowman C."/>
            <person name="Fujii C."/>
            <person name="Garland S.A."/>
            <person name="Mason T.M."/>
            <person name="Olsen G.J."/>
            <person name="Fraser C.M."/>
            <person name="Smith H.O."/>
            <person name="Woese C.R."/>
            <person name="Venter J.C."/>
        </authorList>
    </citation>
    <scope>NUCLEOTIDE SEQUENCE [LARGE SCALE GENOMIC DNA]</scope>
    <source>
        <strain>ATCC 49558 / DSM 4304 / JCM 9628 / NBRC 100126 / VC-16</strain>
    </source>
</reference>
<reference key="2">
    <citation type="journal article" date="1998" name="Arch. Microbiol.">
        <title>Acetyl-CoA decarbonylase/synthase complex from Archaeoglobus fulgidus.</title>
        <authorList>
            <person name="Dai Y.R."/>
            <person name="Reed D.W."/>
            <person name="Millstein J.H."/>
            <person name="Hartzell P.L."/>
            <person name="Grahame D.A."/>
            <person name="DeMoll E."/>
        </authorList>
    </citation>
    <scope>PROTEIN SEQUENCE OF 2-23</scope>
    <scope>FUNCTION</scope>
    <scope>CATALYTIC ACTIVITY</scope>
    <source>
        <strain>ATCC 49558 / DSM 4304 / JCM 9628 / NBRC 100126 / VC-16</strain>
    </source>
</reference>
<feature type="initiator methionine" description="Removed" evidence="3">
    <location>
        <position position="1"/>
    </location>
</feature>
<feature type="chain" id="PRO_0000155098" description="Acetyl-CoA decarbonylase/synthase complex subunit beta">
    <location>
        <begin position="2"/>
        <end position="524"/>
    </location>
</feature>
<feature type="region of interest" description="Disordered" evidence="2">
    <location>
        <begin position="436"/>
        <end position="466"/>
    </location>
</feature>
<feature type="compositionally biased region" description="Acidic residues" evidence="2">
    <location>
        <begin position="437"/>
        <end position="452"/>
    </location>
</feature>
<feature type="compositionally biased region" description="Low complexity" evidence="2">
    <location>
        <begin position="453"/>
        <end position="466"/>
    </location>
</feature>
<feature type="binding site" evidence="1">
    <location>
        <position position="212"/>
    </location>
    <ligand>
        <name>[Ni-Fe-S] cluster</name>
        <dbReference type="ChEBI" id="CHEBI:60400"/>
    </ligand>
</feature>
<feature type="binding site" evidence="1">
    <location>
        <position position="215"/>
    </location>
    <ligand>
        <name>[Ni-Fe-S] cluster</name>
        <dbReference type="ChEBI" id="CHEBI:60400"/>
    </ligand>
</feature>
<feature type="binding site" evidence="1">
    <location>
        <position position="301"/>
    </location>
    <ligand>
        <name>[Ni-Fe-S] cluster</name>
        <dbReference type="ChEBI" id="CHEBI:60400"/>
    </ligand>
</feature>
<feature type="binding site" evidence="1">
    <location>
        <position position="303"/>
    </location>
    <ligand>
        <name>[Ni-Fe-S] cluster</name>
        <dbReference type="ChEBI" id="CHEBI:60400"/>
    </ligand>
</feature>
<keyword id="KW-0012">Acyltransferase</keyword>
<keyword id="KW-0903">Direct protein sequencing</keyword>
<keyword id="KW-0408">Iron</keyword>
<keyword id="KW-0411">Iron-sulfur</keyword>
<keyword id="KW-0479">Metal-binding</keyword>
<keyword id="KW-0533">Nickel</keyword>
<keyword id="KW-1185">Reference proteome</keyword>
<keyword id="KW-0808">Transferase</keyword>
<accession>O29868</accession>
<sequence length="524" mass="58576">MVERKRIEIPEGVKVKESVGEEAEFPFDISPMYEGERIRKGDMYVELGGPTQPGFELVMALPMDQVEDMKVTLIGPDLDEMEEGQAYPYAMIYYIAGEMVETDLEPVIERRNHDFQNYIEGYMHLNQRYDIWIRIGKNAIKKGLKSLIQIAKATMMLYKNELPFIEKIEAVYITDKDLVEKLLNELAMPIFEERDARVEALSDEDVDEFYSCTLCQSFAPTNVCIVSPDRPSLCGAITWFDGRAAAKVDPEGPNRAVPKGELLDPIGGEYSGVNEFAKQESGGEYERIKLHSFFEYPHTSCGCFEVIGFYMPEVDGIGWVHRGYAEPAPNGLTFSTMAGQTGGGKQVVGFLGIGIAYFRSKKFIQADGGWYRTVWMPKELKERVAKYIPDDIRDKIATEEDAKTLDELREFLKKVDHPVVKGVVRPVDGKKITNGWVEEEEEEAEEVAEEAAAEAAPAAQPAQAAQPMAMQPMPMQMPGFQLPALQMPAASAAPAGVKLVIKDAKITIEKVIIKKAEKEKKGGK</sequence>
<gene>
    <name evidence="1" type="primary">cdhC</name>
    <name type="ordered locus">AF_0379</name>
</gene>
<evidence type="ECO:0000255" key="1">
    <source>
        <dbReference type="HAMAP-Rule" id="MF_01138"/>
    </source>
</evidence>
<evidence type="ECO:0000256" key="2">
    <source>
        <dbReference type="SAM" id="MobiDB-lite"/>
    </source>
</evidence>
<evidence type="ECO:0000269" key="3">
    <source>
    </source>
</evidence>
<organism>
    <name type="scientific">Archaeoglobus fulgidus (strain ATCC 49558 / DSM 4304 / JCM 9628 / NBRC 100126 / VC-16)</name>
    <dbReference type="NCBI Taxonomy" id="224325"/>
    <lineage>
        <taxon>Archaea</taxon>
        <taxon>Methanobacteriati</taxon>
        <taxon>Methanobacteriota</taxon>
        <taxon>Archaeoglobi</taxon>
        <taxon>Archaeoglobales</taxon>
        <taxon>Archaeoglobaceae</taxon>
        <taxon>Archaeoglobus</taxon>
    </lineage>
</organism>
<name>ACDB_ARCFU</name>
<proteinExistence type="evidence at protein level"/>
<protein>
    <recommendedName>
        <fullName evidence="1">Acetyl-CoA decarbonylase/synthase complex subunit beta</fullName>
        <shortName evidence="1">ACDS complex subunit beta</shortName>
        <ecNumber evidence="1 3">2.3.1.169</ecNumber>
    </recommendedName>
    <alternativeName>
        <fullName evidence="1">ACDS complex acyltransferase</fullName>
    </alternativeName>
</protein>
<comment type="function">
    <text evidence="1 3">Part of a complex that catalyzes the reversible cleavage of acetyl-CoA, allowing autotrophic growth from CO(2). The alpha-epsilon complex generates CO from CO(2), while the beta subunit (this protein) combines the CO with CoA and a methyl group to form acetyl-CoA. The methyl group, which is incorporated into acetyl-CoA, is transferred to the beta subunit by a corrinoid iron-sulfur protein (the gamma-delta complex).</text>
</comment>
<comment type="catalytic activity">
    <reaction evidence="1 3">
        <text>Co(I)-[corrinoid Fe-S protein] + acetyl-CoA + H(+) = methyl-Co(III)-[corrinoid Fe-S protein] + CO + CoA</text>
        <dbReference type="Rhea" id="RHEA:45212"/>
        <dbReference type="Rhea" id="RHEA-COMP:11110"/>
        <dbReference type="Rhea" id="RHEA-COMP:11111"/>
        <dbReference type="ChEBI" id="CHEBI:15378"/>
        <dbReference type="ChEBI" id="CHEBI:17245"/>
        <dbReference type="ChEBI" id="CHEBI:57287"/>
        <dbReference type="ChEBI" id="CHEBI:57288"/>
        <dbReference type="ChEBI" id="CHEBI:85033"/>
        <dbReference type="ChEBI" id="CHEBI:85035"/>
        <dbReference type="EC" id="2.3.1.169"/>
    </reaction>
</comment>
<comment type="cofactor">
    <cofactor evidence="1">
        <name>[Ni-Fe-S] cluster</name>
        <dbReference type="ChEBI" id="CHEBI:60400"/>
    </cofactor>
    <text evidence="1">Binds 1 [Ni-Fe-S] cluster.</text>
</comment>
<comment type="subunit">
    <text evidence="1">Monomer. The ACDS complex is made up of alpha, epsilon, beta, gamma and delta chains with a probable stoichiometry of (alpha(2)epsilon(2))(4)-beta(8)-(gamma(1)delta(1))(8).</text>
</comment>
<comment type="similarity">
    <text evidence="1">Belongs to the CdhC family.</text>
</comment>
<dbReference type="EC" id="2.3.1.169" evidence="1 3"/>
<dbReference type="EMBL" id="AE000782">
    <property type="protein sequence ID" value="AAB90857.1"/>
    <property type="molecule type" value="Genomic_DNA"/>
</dbReference>
<dbReference type="PIR" id="C69297">
    <property type="entry name" value="C69297"/>
</dbReference>
<dbReference type="RefSeq" id="WP_010877886.1">
    <property type="nucleotide sequence ID" value="NC_000917.1"/>
</dbReference>
<dbReference type="SMR" id="O29868"/>
<dbReference type="STRING" id="224325.AF_0379"/>
<dbReference type="PaxDb" id="224325-AF_0379"/>
<dbReference type="EnsemblBacteria" id="AAB90857">
    <property type="protein sequence ID" value="AAB90857"/>
    <property type="gene ID" value="AF_0379"/>
</dbReference>
<dbReference type="GeneID" id="24793918"/>
<dbReference type="KEGG" id="afu:AF_0379"/>
<dbReference type="eggNOG" id="arCOG04360">
    <property type="taxonomic scope" value="Archaea"/>
</dbReference>
<dbReference type="HOGENOM" id="CLU_613408_0_0_2"/>
<dbReference type="OrthoDB" id="69951at2157"/>
<dbReference type="PhylomeDB" id="O29868"/>
<dbReference type="BioCyc" id="MetaCyc:AF_RS01935-MONOMER"/>
<dbReference type="Proteomes" id="UP000002199">
    <property type="component" value="Chromosome"/>
</dbReference>
<dbReference type="GO" id="GO:0016407">
    <property type="term" value="F:acetyltransferase activity"/>
    <property type="evidence" value="ECO:0007669"/>
    <property type="project" value="UniProtKB-UniRule"/>
</dbReference>
<dbReference type="GO" id="GO:0043885">
    <property type="term" value="F:anaerobic carbon-monoxide dehydrogenase activity"/>
    <property type="evidence" value="ECO:0007669"/>
    <property type="project" value="InterPro"/>
</dbReference>
<dbReference type="GO" id="GO:0043884">
    <property type="term" value="F:CO-methylating acetyl-CoA synthase activity"/>
    <property type="evidence" value="ECO:0007669"/>
    <property type="project" value="UniProtKB-EC"/>
</dbReference>
<dbReference type="GO" id="GO:0005506">
    <property type="term" value="F:iron ion binding"/>
    <property type="evidence" value="ECO:0007669"/>
    <property type="project" value="UniProtKB-UniRule"/>
</dbReference>
<dbReference type="GO" id="GO:0051536">
    <property type="term" value="F:iron-sulfur cluster binding"/>
    <property type="evidence" value="ECO:0007669"/>
    <property type="project" value="UniProtKB-KW"/>
</dbReference>
<dbReference type="GO" id="GO:0016151">
    <property type="term" value="F:nickel cation binding"/>
    <property type="evidence" value="ECO:0007669"/>
    <property type="project" value="UniProtKB-UniRule"/>
</dbReference>
<dbReference type="GO" id="GO:0006084">
    <property type="term" value="P:acetyl-CoA metabolic process"/>
    <property type="evidence" value="ECO:0007669"/>
    <property type="project" value="InterPro"/>
</dbReference>
<dbReference type="Gene3D" id="3.30.1650.10">
    <property type="entry name" value="Bifunctional carbon monoxide dehydrogenase/acetyl-coa synthase(codh/acs), Chain M, domain 3"/>
    <property type="match status" value="1"/>
</dbReference>
<dbReference type="Gene3D" id="3.40.1470.10">
    <property type="entry name" value="Bifunctional carbon monoxide dehydrogenase/acetyl-coa synthase(codh/acs), Chain M, domain 5"/>
    <property type="match status" value="1"/>
</dbReference>
<dbReference type="Gene3D" id="3.40.970.20">
    <property type="entry name" value="Carbon monoxide dehydrogenase alpha subunit. Chain D, domain 4"/>
    <property type="match status" value="1"/>
</dbReference>
<dbReference type="HAMAP" id="MF_01138">
    <property type="entry name" value="CdhC"/>
    <property type="match status" value="1"/>
</dbReference>
<dbReference type="InterPro" id="IPR045822">
    <property type="entry name" value="ACS_CODH_B_C"/>
</dbReference>
<dbReference type="InterPro" id="IPR004461">
    <property type="entry name" value="CO_DH/Ac-CoA_synth_bsu"/>
</dbReference>
<dbReference type="InterPro" id="IPR038571">
    <property type="entry name" value="CO_DH/Ac-CoA_synth_bsu_3_sf"/>
</dbReference>
<dbReference type="InterPro" id="IPR023432">
    <property type="entry name" value="CO_DH/Ac-CoA_synth_bsu_arc"/>
</dbReference>
<dbReference type="InterPro" id="IPR011254">
    <property type="entry name" value="Prismane-like_sf"/>
</dbReference>
<dbReference type="NCBIfam" id="TIGR00316">
    <property type="entry name" value="cdhC"/>
    <property type="match status" value="1"/>
</dbReference>
<dbReference type="NCBIfam" id="NF003379">
    <property type="entry name" value="PRK04456.1"/>
    <property type="match status" value="1"/>
</dbReference>
<dbReference type="PANTHER" id="PTHR42281">
    <property type="match status" value="1"/>
</dbReference>
<dbReference type="PANTHER" id="PTHR42281:SF1">
    <property type="entry name" value="ACETYL-COA DECARBONYLASE_SYNTHASE COMPLEX SUBUNIT BETA 1"/>
    <property type="match status" value="1"/>
</dbReference>
<dbReference type="Pfam" id="PF19436">
    <property type="entry name" value="ACS_CODH_B_C"/>
    <property type="match status" value="1"/>
</dbReference>
<dbReference type="Pfam" id="PF03598">
    <property type="entry name" value="CdhC"/>
    <property type="match status" value="1"/>
</dbReference>
<dbReference type="SUPFAM" id="SSF56821">
    <property type="entry name" value="Prismane protein-like"/>
    <property type="match status" value="1"/>
</dbReference>